<dbReference type="EMBL" id="D10206">
    <property type="protein sequence ID" value="BAA01056.1"/>
    <property type="molecule type" value="Genomic_RNA"/>
</dbReference>
<dbReference type="EMBL" id="X17259">
    <property type="protein sequence ID" value="CAA35161.1"/>
    <property type="molecule type" value="Genomic_RNA"/>
</dbReference>
<dbReference type="EMBL" id="L25299">
    <property type="protein sequence ID" value="AAA42870.1"/>
    <property type="molecule type" value="Genomic_RNA"/>
</dbReference>
<dbReference type="KEGG" id="vg:1478312"/>
<dbReference type="Proteomes" id="UP000203222">
    <property type="component" value="Segment"/>
</dbReference>
<dbReference type="GO" id="GO:0046740">
    <property type="term" value="P:transport of virus in host, cell to cell"/>
    <property type="evidence" value="ECO:0007669"/>
    <property type="project" value="UniProtKB-KW"/>
</dbReference>
<dbReference type="InterPro" id="IPR001964">
    <property type="entry name" value="Luteo_VPG"/>
</dbReference>
<dbReference type="Pfam" id="PF01659">
    <property type="entry name" value="Luteo_Vpg"/>
    <property type="match status" value="1"/>
</dbReference>
<dbReference type="PRINTS" id="PR00912">
    <property type="entry name" value="LVIRUSORF5"/>
</dbReference>
<accession>P27579</accession>
<sequence length="153" mass="17209">MAMVRADADRESLGEGLLQERSQWLWSLPTAQPGAEDADDQLVLGEEELQDLEEEAVARHSFSQRIHSRATPLEVSPSGRLYQSIRHSRMEYSRPTMNIRSQIVSYSSSARPLPQQPAPSLTSWTPIAKHLHSHQQSISSQSPKLVRGASQRR</sequence>
<organismHost>
    <name type="scientific">Avena byzantina</name>
    <dbReference type="NCBI Taxonomy" id="146531"/>
</organismHost>
<organismHost>
    <name type="scientific">Avena sativa</name>
    <name type="common">Oat</name>
    <dbReference type="NCBI Taxonomy" id="4498"/>
</organismHost>
<organismHost>
    <name type="scientific">Hordeum vulgare</name>
    <name type="common">Barley</name>
    <dbReference type="NCBI Taxonomy" id="4513"/>
</organismHost>
<organismHost>
    <name type="scientific">Lolium multiflorum</name>
    <name type="common">Italian ryegrass</name>
    <name type="synonym">Lolium perenne subsp. multiflorum</name>
    <dbReference type="NCBI Taxonomy" id="4521"/>
</organismHost>
<organismHost>
    <name type="scientific">Lolium perenne</name>
    <name type="common">Perennial ryegrass</name>
    <dbReference type="NCBI Taxonomy" id="4522"/>
</organismHost>
<organismHost>
    <name type="scientific">Oryza sativa</name>
    <name type="common">Rice</name>
    <dbReference type="NCBI Taxonomy" id="4530"/>
</organismHost>
<organismHost>
    <name type="scientific">Secale cereale</name>
    <name type="common">Rye</name>
    <dbReference type="NCBI Taxonomy" id="4550"/>
</organismHost>
<organismHost>
    <name type="scientific">Triticum aestivum</name>
    <name type="common">Wheat</name>
    <dbReference type="NCBI Taxonomy" id="4565"/>
</organismHost>
<organismHost>
    <name type="scientific">Zea mays</name>
    <name type="common">Maize</name>
    <dbReference type="NCBI Taxonomy" id="4577"/>
</organismHost>
<keyword id="KW-1185">Reference proteome</keyword>
<keyword id="KW-0813">Transport</keyword>
<keyword id="KW-0916">Viral movement protein</keyword>
<reference key="1">
    <citation type="journal article" date="1990" name="J. Gen. Virol.">
        <title>Nucleotide sequences of coat protein genes for three isolates of barley yellow dwarf virus and their relationships to other luteovirus coat protein sequences.</title>
        <authorList>
            <person name="Vincent J.R."/>
            <person name="Ueng P.P."/>
            <person name="Lister R.M."/>
            <person name="Larkins B.A."/>
        </authorList>
    </citation>
    <scope>NUCLEOTIDE SEQUENCE [GENOMIC RNA]</scope>
</reference>
<reference key="2">
    <citation type="journal article" date="1991" name="J. Gen. Virol.">
        <title>Nucleotide sequence analysis and genomic organization of the NY-RPV isolate of barley yellow dwarf virus.</title>
        <authorList>
            <person name="Larkins B.A."/>
            <person name="Lister R.M."/>
            <person name="Vincent J.R."/>
        </authorList>
    </citation>
    <scope>NUCLEOTIDE SEQUENCE [GENOMIC RNA]</scope>
</reference>
<organism>
    <name type="scientific">Cereal yellow dwarf virus (isolate RPV)</name>
    <name type="common">BYDV</name>
    <dbReference type="NCBI Taxonomy" id="2170100"/>
    <lineage>
        <taxon>Viruses</taxon>
        <taxon>Riboviria</taxon>
        <taxon>Orthornavirae</taxon>
        <taxon>Pisuviricota</taxon>
        <taxon>Pisoniviricetes</taxon>
        <taxon>Sobelivirales</taxon>
        <taxon>Solemoviridae</taxon>
        <taxon>Polerovirus</taxon>
    </lineage>
</organism>
<comment type="function">
    <text evidence="1">Transports viral genome to neighboring plant cells directly through plasmosdesmata, without any budding. The movement protein allows efficient cell to cell propagation, by bypassing the host cell wall barrier (By similarity).</text>
</comment>
<comment type="similarity">
    <text evidence="3">Belongs to the luteoviruses movement protein family.</text>
</comment>
<evidence type="ECO:0000250" key="1"/>
<evidence type="ECO:0000256" key="2">
    <source>
        <dbReference type="SAM" id="MobiDB-lite"/>
    </source>
</evidence>
<evidence type="ECO:0000305" key="3"/>
<name>MVP_BYDVN</name>
<protein>
    <recommendedName>
        <fullName>Movement protein</fullName>
        <shortName>MP</shortName>
    </recommendedName>
    <alternativeName>
        <fullName>17 kDa protein</fullName>
    </alternativeName>
</protein>
<proteinExistence type="inferred from homology"/>
<gene>
    <name type="ORF">ORF4</name>
</gene>
<feature type="chain" id="PRO_0000222419" description="Movement protein">
    <location>
        <begin position="1"/>
        <end position="153"/>
    </location>
</feature>
<feature type="region of interest" description="Disordered" evidence="2">
    <location>
        <begin position="107"/>
        <end position="153"/>
    </location>
</feature>